<comment type="function">
    <text evidence="2">Catalyzes two non-sequential steps in de novo AMP synthesis: converts (S)-2-(5-amino-1-(5-phospho-D-ribosyl)imidazole-4-carboxamido)succinate (SAICAR) to fumarate plus 5-amino-1-(5-phospho-D-ribosyl)imidazole-4-carboxamide, and thereby also contributes to de novo IMP synthesis, and converts succinyladenosine monophosphate (SAMP) to AMP and fumarate.</text>
</comment>
<comment type="catalytic activity">
    <reaction evidence="2">
        <text>N(6)-(1,2-dicarboxyethyl)-AMP = fumarate + AMP</text>
        <dbReference type="Rhea" id="RHEA:16853"/>
        <dbReference type="ChEBI" id="CHEBI:29806"/>
        <dbReference type="ChEBI" id="CHEBI:57567"/>
        <dbReference type="ChEBI" id="CHEBI:456215"/>
        <dbReference type="EC" id="4.3.2.2"/>
    </reaction>
</comment>
<comment type="catalytic activity">
    <reaction evidence="2">
        <text>(2S)-2-[5-amino-1-(5-phospho-beta-D-ribosyl)imidazole-4-carboxamido]succinate = 5-amino-1-(5-phospho-beta-D-ribosyl)imidazole-4-carboxamide + fumarate</text>
        <dbReference type="Rhea" id="RHEA:23920"/>
        <dbReference type="ChEBI" id="CHEBI:29806"/>
        <dbReference type="ChEBI" id="CHEBI:58443"/>
        <dbReference type="ChEBI" id="CHEBI:58475"/>
        <dbReference type="EC" id="4.3.2.2"/>
    </reaction>
</comment>
<comment type="pathway">
    <text>Purine metabolism; AMP biosynthesis via de novo pathway; AMP from IMP: step 2/2.</text>
</comment>
<comment type="pathway">
    <text>Purine metabolism; IMP biosynthesis via de novo pathway; 5-amino-1-(5-phospho-D-ribosyl)imidazole-4-carboxamide from 5-amino-1-(5-phospho-D-ribosyl)imidazole-4-carboxylate: step 2/2.</text>
</comment>
<comment type="subunit">
    <text evidence="2">Homotetramer. Residues from neighboring subunits contribute catalytic and substrate-binding residues to each active site.</text>
</comment>
<comment type="similarity">
    <text evidence="3">Belongs to the lyase 1 family. Adenylosuccinate lyase subfamily.</text>
</comment>
<feature type="initiator methionine" description="Removed" evidence="2">
    <location>
        <position position="1"/>
    </location>
</feature>
<feature type="chain" id="PRO_0000328544" description="Adenylosuccinate lyase">
    <location>
        <begin position="2"/>
        <end position="490"/>
    </location>
</feature>
<feature type="active site" description="Proton donor/acceptor" evidence="1">
    <location>
        <position position="165"/>
    </location>
</feature>
<feature type="active site" description="Proton donor/acceptor" evidence="1">
    <location>
        <position position="295"/>
    </location>
</feature>
<feature type="binding site" evidence="1">
    <location>
        <begin position="26"/>
        <end position="27"/>
    </location>
    <ligand>
        <name>substrate</name>
        <note>ligand shared between two neighboring subunits</note>
    </ligand>
</feature>
<feature type="binding site" description="in other chain" evidence="1">
    <location>
        <begin position="91"/>
        <end position="93"/>
    </location>
    <ligand>
        <name>substrate</name>
        <note>ligand shared between two neighboring subunits</note>
    </ligand>
</feature>
<feature type="binding site" description="in other chain" evidence="1">
    <location>
        <begin position="117"/>
        <end position="118"/>
    </location>
    <ligand>
        <name>substrate</name>
        <note>ligand shared between two neighboring subunits</note>
    </ligand>
</feature>
<feature type="binding site" description="in other chain" evidence="1">
    <location>
        <position position="247"/>
    </location>
    <ligand>
        <name>substrate</name>
        <note>ligand shared between two neighboring subunits</note>
    </ligand>
</feature>
<feature type="binding site" evidence="1">
    <location>
        <position position="309"/>
    </location>
    <ligand>
        <name>substrate</name>
        <note>ligand shared between two neighboring subunits</note>
    </ligand>
</feature>
<feature type="binding site" description="in other chain" evidence="1">
    <location>
        <position position="335"/>
    </location>
    <ligand>
        <name>substrate</name>
        <note>ligand shared between two neighboring subunits</note>
    </ligand>
</feature>
<feature type="binding site" description="in other chain" evidence="1">
    <location>
        <position position="340"/>
    </location>
    <ligand>
        <name>substrate</name>
        <note>ligand shared between two neighboring subunits</note>
    </ligand>
</feature>
<feature type="binding site" description="in other chain" evidence="1">
    <location>
        <position position="344"/>
    </location>
    <ligand>
        <name>substrate</name>
        <note>ligand shared between two neighboring subunits</note>
    </ligand>
</feature>
<feature type="modified residue" description="N-acetylalanine" evidence="2">
    <location>
        <position position="2"/>
    </location>
</feature>
<feature type="modified residue" description="N6-acetyllysine" evidence="2">
    <location>
        <position position="153"/>
    </location>
</feature>
<feature type="modified residue" description="N6-acetyllysine" evidence="2">
    <location>
        <position position="301"/>
    </location>
</feature>
<feature type="cross-link" description="Glycyl lysine isopeptide (Lys-Gly) (interchain with G-Cter in SUMO1)" evidence="2">
    <location>
        <position position="421"/>
    </location>
</feature>
<protein>
    <recommendedName>
        <fullName>Adenylosuccinate lyase</fullName>
        <shortName>ADSL</shortName>
        <shortName>ASL</shortName>
        <ecNumber evidence="2">4.3.2.2</ecNumber>
    </recommendedName>
    <alternativeName>
        <fullName>Adenylosuccinase</fullName>
        <shortName>ASase</shortName>
    </alternativeName>
</protein>
<reference key="1">
    <citation type="submission" date="2007-02" db="EMBL/GenBank/DDBJ databases">
        <authorList>
            <consortium name="NIH - Mammalian Gene Collection (MGC) project"/>
        </authorList>
    </citation>
    <scope>NUCLEOTIDE SEQUENCE [LARGE SCALE MRNA]</scope>
    <source>
        <strain>Hereford</strain>
        <tissue>Fetal spinal cord</tissue>
    </source>
</reference>
<keyword id="KW-0007">Acetylation</keyword>
<keyword id="KW-1017">Isopeptide bond</keyword>
<keyword id="KW-0456">Lyase</keyword>
<keyword id="KW-0658">Purine biosynthesis</keyword>
<keyword id="KW-1185">Reference proteome</keyword>
<keyword id="KW-0832">Ubl conjugation</keyword>
<sequence length="490" mass="55484">MAAAGDRGGREAACGHDSYRSPLASRYASPEMCFLFSDKYKFRTWRQLWLWLAEAEQTLGLPITDEQIQEMKSNLDNIDFRMAAEEEKQLRHDVMAHVHTFAHCCPKAASIIHLGATSCYVGDNTDLIILRNAFDLLLPKLARVISRLADFAKEQADLPTLGFTHFQPAQLTTVGKRCCLWIQDLCMDLQNLKRVRDELRFRGVKGTTGTQASFLQLFEGDDQKVEQLDKMVTEKAGFKRAFIITGQTYTRKVDIEVLSVLASLGASVHKICTDIRLLANLKEMEEPFEKQQIGSSAMPYKRNPMRSERCCSLARHLMALVMDPLQTASVQWFERTLDDSANRRICLAEAFLTADTVLNTLQNISEGLVVYPKVIERRVQQELPFMATENIIMAMVKAGGNRQDCREKIRVLSQQAAAVVKQEGGDNDLIERIQADAYFSPIHSQLDHLLDPSSFTGRASQQVQRFLEEEVCPLLKPYESVMKVKAELRL</sequence>
<organism>
    <name type="scientific">Bos taurus</name>
    <name type="common">Bovine</name>
    <dbReference type="NCBI Taxonomy" id="9913"/>
    <lineage>
        <taxon>Eukaryota</taxon>
        <taxon>Metazoa</taxon>
        <taxon>Chordata</taxon>
        <taxon>Craniata</taxon>
        <taxon>Vertebrata</taxon>
        <taxon>Euteleostomi</taxon>
        <taxon>Mammalia</taxon>
        <taxon>Eutheria</taxon>
        <taxon>Laurasiatheria</taxon>
        <taxon>Artiodactyla</taxon>
        <taxon>Ruminantia</taxon>
        <taxon>Pecora</taxon>
        <taxon>Bovidae</taxon>
        <taxon>Bovinae</taxon>
        <taxon>Bos</taxon>
    </lineage>
</organism>
<proteinExistence type="evidence at transcript level"/>
<accession>A3KN12</accession>
<gene>
    <name type="primary">ADSL</name>
</gene>
<name>PUR8_BOVIN</name>
<evidence type="ECO:0000250" key="1"/>
<evidence type="ECO:0000250" key="2">
    <source>
        <dbReference type="UniProtKB" id="P30566"/>
    </source>
</evidence>
<evidence type="ECO:0000305" key="3"/>
<dbReference type="EC" id="4.3.2.2" evidence="2"/>
<dbReference type="EMBL" id="BC133474">
    <property type="protein sequence ID" value="AAI33475.1"/>
    <property type="molecule type" value="mRNA"/>
</dbReference>
<dbReference type="RefSeq" id="NP_001095847.1">
    <property type="nucleotide sequence ID" value="NM_001102377.2"/>
</dbReference>
<dbReference type="SMR" id="A3KN12"/>
<dbReference type="FunCoup" id="A3KN12">
    <property type="interactions" value="2497"/>
</dbReference>
<dbReference type="STRING" id="9913.ENSBTAP00000000085"/>
<dbReference type="PaxDb" id="9913-ENSBTAP00000000085"/>
<dbReference type="GeneID" id="510949"/>
<dbReference type="KEGG" id="bta:510949"/>
<dbReference type="CTD" id="158"/>
<dbReference type="eggNOG" id="KOG2700">
    <property type="taxonomic scope" value="Eukaryota"/>
</dbReference>
<dbReference type="InParanoid" id="A3KN12"/>
<dbReference type="OrthoDB" id="406045at2759"/>
<dbReference type="UniPathway" id="UPA00074">
    <property type="reaction ID" value="UER00132"/>
</dbReference>
<dbReference type="UniPathway" id="UPA00075">
    <property type="reaction ID" value="UER00336"/>
</dbReference>
<dbReference type="Proteomes" id="UP000009136">
    <property type="component" value="Unplaced"/>
</dbReference>
<dbReference type="GO" id="GO:0005829">
    <property type="term" value="C:cytosol"/>
    <property type="evidence" value="ECO:0000318"/>
    <property type="project" value="GO_Central"/>
</dbReference>
<dbReference type="GO" id="GO:0070626">
    <property type="term" value="F:(S)-2-(5-amino-1-(5-phospho-D-ribosyl)imidazole-4-carboxamido) succinate lyase (fumarate-forming) activity"/>
    <property type="evidence" value="ECO:0000318"/>
    <property type="project" value="GO_Central"/>
</dbReference>
<dbReference type="GO" id="GO:0004018">
    <property type="term" value="F:N6-(1,2-dicarboxyethyl)AMP AMP-lyase (fumarate-forming) activity"/>
    <property type="evidence" value="ECO:0000318"/>
    <property type="project" value="GO_Central"/>
</dbReference>
<dbReference type="GO" id="GO:0044208">
    <property type="term" value="P:'de novo' AMP biosynthetic process"/>
    <property type="evidence" value="ECO:0000318"/>
    <property type="project" value="GO_Central"/>
</dbReference>
<dbReference type="GO" id="GO:0006189">
    <property type="term" value="P:'de novo' IMP biosynthetic process"/>
    <property type="evidence" value="ECO:0007669"/>
    <property type="project" value="UniProtKB-UniPathway"/>
</dbReference>
<dbReference type="CDD" id="cd03302">
    <property type="entry name" value="Adenylsuccinate_lyase_2"/>
    <property type="match status" value="1"/>
</dbReference>
<dbReference type="FunFam" id="1.10.275.60:FF:000001">
    <property type="entry name" value="Adenylosuccinate lyase"/>
    <property type="match status" value="1"/>
</dbReference>
<dbReference type="FunFam" id="1.10.40.30:FF:000005">
    <property type="entry name" value="Adenylosuccinate lyase"/>
    <property type="match status" value="1"/>
</dbReference>
<dbReference type="Gene3D" id="1.10.275.60">
    <property type="match status" value="1"/>
</dbReference>
<dbReference type="Gene3D" id="1.10.40.30">
    <property type="entry name" value="Fumarase/aspartase (C-terminal domain)"/>
    <property type="match status" value="1"/>
</dbReference>
<dbReference type="Gene3D" id="1.20.200.10">
    <property type="entry name" value="Fumarase/aspartase (Central domain)"/>
    <property type="match status" value="1"/>
</dbReference>
<dbReference type="InterPro" id="IPR019468">
    <property type="entry name" value="AdenyloSucc_lyase_C"/>
</dbReference>
<dbReference type="InterPro" id="IPR020557">
    <property type="entry name" value="Fumarate_lyase_CS"/>
</dbReference>
<dbReference type="InterPro" id="IPR000362">
    <property type="entry name" value="Fumarate_lyase_fam"/>
</dbReference>
<dbReference type="InterPro" id="IPR022761">
    <property type="entry name" value="Fumarate_lyase_N"/>
</dbReference>
<dbReference type="InterPro" id="IPR008948">
    <property type="entry name" value="L-Aspartase-like"/>
</dbReference>
<dbReference type="InterPro" id="IPR004769">
    <property type="entry name" value="Pur_lyase"/>
</dbReference>
<dbReference type="NCBIfam" id="TIGR00928">
    <property type="entry name" value="purB"/>
    <property type="match status" value="1"/>
</dbReference>
<dbReference type="PANTHER" id="PTHR43172">
    <property type="entry name" value="ADENYLOSUCCINATE LYASE"/>
    <property type="match status" value="1"/>
</dbReference>
<dbReference type="PANTHER" id="PTHR43172:SF1">
    <property type="entry name" value="ADENYLOSUCCINATE LYASE"/>
    <property type="match status" value="1"/>
</dbReference>
<dbReference type="Pfam" id="PF10397">
    <property type="entry name" value="ADSL_C"/>
    <property type="match status" value="1"/>
</dbReference>
<dbReference type="Pfam" id="PF00206">
    <property type="entry name" value="Lyase_1"/>
    <property type="match status" value="1"/>
</dbReference>
<dbReference type="PRINTS" id="PR00145">
    <property type="entry name" value="ARGSUCLYASE"/>
</dbReference>
<dbReference type="PRINTS" id="PR00149">
    <property type="entry name" value="FUMRATELYASE"/>
</dbReference>
<dbReference type="SMART" id="SM00998">
    <property type="entry name" value="ADSL_C"/>
    <property type="match status" value="1"/>
</dbReference>
<dbReference type="SUPFAM" id="SSF48557">
    <property type="entry name" value="L-aspartase-like"/>
    <property type="match status" value="1"/>
</dbReference>
<dbReference type="PROSITE" id="PS00163">
    <property type="entry name" value="FUMARATE_LYASES"/>
    <property type="match status" value="1"/>
</dbReference>